<proteinExistence type="evidence at protein level"/>
<name>KRA3A_SHEEP</name>
<keyword id="KW-0903">Direct protein sequencing</keyword>
<keyword id="KW-0416">Keratin</keyword>
<keyword id="KW-1185">Reference proteome</keyword>
<accession>P02443</accession>
<sequence length="130" mass="13894">TGSCCGPTFSSLSCGGGCLQPCCYRDPCCCRPVSSTQTVSRPVTFVSRCTRPICEPCRRPVCCDPCSLQEGCCRPITCCPTSCQAVVCRPCCWATTCCQPVSVQCPCCRPTSCPSAPRTTCRTFRTSPCC</sequence>
<protein>
    <recommendedName>
        <fullName>Keratin, high-sulfur matrix protein, IIIA3A</fullName>
    </recommendedName>
</protein>
<dbReference type="PIR" id="A02841">
    <property type="entry name" value="KRSH3A"/>
</dbReference>
<dbReference type="STRING" id="9940.ENSOARP00000000079"/>
<dbReference type="PaxDb" id="9940-ENSOARP00000000079"/>
<dbReference type="eggNOG" id="KOG4726">
    <property type="taxonomic scope" value="Eukaryota"/>
</dbReference>
<dbReference type="Proteomes" id="UP000002356">
    <property type="component" value="Unplaced"/>
</dbReference>
<dbReference type="GO" id="GO:0005829">
    <property type="term" value="C:cytosol"/>
    <property type="evidence" value="ECO:0007669"/>
    <property type="project" value="UniProtKB-ARBA"/>
</dbReference>
<dbReference type="GO" id="GO:0045095">
    <property type="term" value="C:keratin filament"/>
    <property type="evidence" value="ECO:0007669"/>
    <property type="project" value="InterPro"/>
</dbReference>
<dbReference type="InterPro" id="IPR002494">
    <property type="entry name" value="KAP"/>
</dbReference>
<dbReference type="InterPro" id="IPR052154">
    <property type="entry name" value="KRTAP_type_2-like"/>
</dbReference>
<dbReference type="PANTHER" id="PTHR48425">
    <property type="entry name" value="KERATIN-ASSOCIATED PROTEIN 2-1"/>
    <property type="match status" value="1"/>
</dbReference>
<dbReference type="PANTHER" id="PTHR48425:SF1">
    <property type="entry name" value="KERATIN-ASSOCIATED PROTEIN 2-1"/>
    <property type="match status" value="1"/>
</dbReference>
<dbReference type="Pfam" id="PF01500">
    <property type="entry name" value="Keratin_B2"/>
    <property type="match status" value="2"/>
</dbReference>
<comment type="function">
    <text>The keratin products of mammalian epidermal derivatives such as wool and hair consist of microfibrils embedded in a rigid matrix of other proteins. The matrix proteins include the high-sulfur and high-tyrosine keratins, having molecular weights of 6-20 kDa, whereas the microfibrils contain the larger, low-sulfur keratins (40-56 kDa).</text>
</comment>
<comment type="tissue specificity">
    <text>Wool.</text>
</comment>
<feature type="chain" id="PRO_0000084320" description="Keratin, high-sulfur matrix protein, IIIA3A">
    <location>
        <begin position="1"/>
        <end position="130"/>
    </location>
</feature>
<reference key="1">
    <citation type="journal article" date="1973" name="Biochem. J.">
        <title>Studies on the high-sulphur proteins of reduced merino wool. Amino acid sequence of protein SCMKB-3A3.</title>
        <authorList>
            <person name="Swart L.S."/>
            <person name="Haylett T."/>
        </authorList>
    </citation>
    <scope>PROTEIN SEQUENCE</scope>
    <source>
        <strain>Merino</strain>
    </source>
</reference>
<organism>
    <name type="scientific">Ovis aries</name>
    <name type="common">Sheep</name>
    <dbReference type="NCBI Taxonomy" id="9940"/>
    <lineage>
        <taxon>Eukaryota</taxon>
        <taxon>Metazoa</taxon>
        <taxon>Chordata</taxon>
        <taxon>Craniata</taxon>
        <taxon>Vertebrata</taxon>
        <taxon>Euteleostomi</taxon>
        <taxon>Mammalia</taxon>
        <taxon>Eutheria</taxon>
        <taxon>Laurasiatheria</taxon>
        <taxon>Artiodactyla</taxon>
        <taxon>Ruminantia</taxon>
        <taxon>Pecora</taxon>
        <taxon>Bovidae</taxon>
        <taxon>Caprinae</taxon>
        <taxon>Ovis</taxon>
    </lineage>
</organism>